<accession>C6DHF6</accession>
<gene>
    <name evidence="1" type="primary">gppA</name>
    <name type="ordered locus">PC1_4014</name>
</gene>
<reference key="1">
    <citation type="submission" date="2009-07" db="EMBL/GenBank/DDBJ databases">
        <title>Complete sequence of Pectobacterium carotovorum subsp. carotovorum PC1.</title>
        <authorList>
            <consortium name="US DOE Joint Genome Institute"/>
            <person name="Lucas S."/>
            <person name="Copeland A."/>
            <person name="Lapidus A."/>
            <person name="Glavina del Rio T."/>
            <person name="Tice H."/>
            <person name="Bruce D."/>
            <person name="Goodwin L."/>
            <person name="Pitluck S."/>
            <person name="Munk A.C."/>
            <person name="Brettin T."/>
            <person name="Detter J.C."/>
            <person name="Han C."/>
            <person name="Tapia R."/>
            <person name="Larimer F."/>
            <person name="Land M."/>
            <person name="Hauser L."/>
            <person name="Kyrpides N."/>
            <person name="Mikhailova N."/>
            <person name="Balakrishnan V."/>
            <person name="Glasner J."/>
            <person name="Perna N.T."/>
        </authorList>
    </citation>
    <scope>NUCLEOTIDE SEQUENCE [LARGE SCALE GENOMIC DNA]</scope>
    <source>
        <strain>PC1</strain>
    </source>
</reference>
<evidence type="ECO:0000255" key="1">
    <source>
        <dbReference type="HAMAP-Rule" id="MF_01550"/>
    </source>
</evidence>
<proteinExistence type="inferred from homology"/>
<comment type="function">
    <text evidence="1">Catalyzes the conversion of pppGpp to ppGpp. Guanosine pentaphosphate (pppGpp) is a cytoplasmic signaling molecule which together with ppGpp controls the 'stringent response', an adaptive process that allows bacteria to respond to amino acid starvation, resulting in the coordinated regulation of numerous cellular activities.</text>
</comment>
<comment type="catalytic activity">
    <reaction evidence="1">
        <text>guanosine 3'-diphosphate 5'-triphosphate + H2O = guanosine 3',5'-bis(diphosphate) + phosphate + H(+)</text>
        <dbReference type="Rhea" id="RHEA:13073"/>
        <dbReference type="ChEBI" id="CHEBI:15377"/>
        <dbReference type="ChEBI" id="CHEBI:15378"/>
        <dbReference type="ChEBI" id="CHEBI:43474"/>
        <dbReference type="ChEBI" id="CHEBI:77828"/>
        <dbReference type="ChEBI" id="CHEBI:142410"/>
        <dbReference type="EC" id="3.6.1.40"/>
    </reaction>
</comment>
<comment type="pathway">
    <text evidence="1">Purine metabolism; ppGpp biosynthesis; ppGpp from GTP: step 2/2.</text>
</comment>
<comment type="similarity">
    <text evidence="1">Belongs to the GppA/Ppx family. GppA subfamily.</text>
</comment>
<protein>
    <recommendedName>
        <fullName evidence="1">Guanosine-5'-triphosphate,3'-diphosphate pyrophosphatase</fullName>
        <ecNumber evidence="1">3.6.1.40</ecNumber>
    </recommendedName>
    <alternativeName>
        <fullName evidence="1">Guanosine pentaphosphate phosphohydrolase</fullName>
    </alternativeName>
    <alternativeName>
        <fullName evidence="1">pppGpp-5'-phosphohydrolase</fullName>
    </alternativeName>
</protein>
<organism>
    <name type="scientific">Pectobacterium carotovorum subsp. carotovorum (strain PC1)</name>
    <dbReference type="NCBI Taxonomy" id="561230"/>
    <lineage>
        <taxon>Bacteria</taxon>
        <taxon>Pseudomonadati</taxon>
        <taxon>Pseudomonadota</taxon>
        <taxon>Gammaproteobacteria</taxon>
        <taxon>Enterobacterales</taxon>
        <taxon>Pectobacteriaceae</taxon>
        <taxon>Pectobacterium</taxon>
    </lineage>
</organism>
<keyword id="KW-0378">Hydrolase</keyword>
<name>GPPA_PECCP</name>
<feature type="chain" id="PRO_1000215466" description="Guanosine-5'-triphosphate,3'-diphosphate pyrophosphatase">
    <location>
        <begin position="1"/>
        <end position="498"/>
    </location>
</feature>
<dbReference type="EC" id="3.6.1.40" evidence="1"/>
<dbReference type="EMBL" id="CP001657">
    <property type="protein sequence ID" value="ACT15029.1"/>
    <property type="molecule type" value="Genomic_DNA"/>
</dbReference>
<dbReference type="SMR" id="C6DHF6"/>
<dbReference type="STRING" id="561230.PC1_4014"/>
<dbReference type="KEGG" id="pct:PC1_4014"/>
<dbReference type="eggNOG" id="COG0248">
    <property type="taxonomic scope" value="Bacteria"/>
</dbReference>
<dbReference type="HOGENOM" id="CLU_025908_4_0_6"/>
<dbReference type="OrthoDB" id="9793035at2"/>
<dbReference type="UniPathway" id="UPA00908">
    <property type="reaction ID" value="UER00885"/>
</dbReference>
<dbReference type="Proteomes" id="UP000002736">
    <property type="component" value="Chromosome"/>
</dbReference>
<dbReference type="GO" id="GO:0004309">
    <property type="term" value="F:exopolyphosphatase activity"/>
    <property type="evidence" value="ECO:0007669"/>
    <property type="project" value="InterPro"/>
</dbReference>
<dbReference type="GO" id="GO:0008894">
    <property type="term" value="F:guanosine-5'-triphosphate,3'-diphosphate diphosphatase activity"/>
    <property type="evidence" value="ECO:0007669"/>
    <property type="project" value="UniProtKB-UniRule"/>
</dbReference>
<dbReference type="GO" id="GO:0015974">
    <property type="term" value="P:guanosine pentaphosphate catabolic process"/>
    <property type="evidence" value="ECO:0007669"/>
    <property type="project" value="InterPro"/>
</dbReference>
<dbReference type="GO" id="GO:0015970">
    <property type="term" value="P:guanosine tetraphosphate biosynthetic process"/>
    <property type="evidence" value="ECO:0007669"/>
    <property type="project" value="UniProtKB-UniRule"/>
</dbReference>
<dbReference type="GO" id="GO:0015949">
    <property type="term" value="P:nucleobase-containing small molecule interconversion"/>
    <property type="evidence" value="ECO:0007669"/>
    <property type="project" value="TreeGrafter"/>
</dbReference>
<dbReference type="CDD" id="cd24117">
    <property type="entry name" value="ASKHA_NBD_EcGppA-like"/>
    <property type="match status" value="1"/>
</dbReference>
<dbReference type="FunFam" id="1.10.3210.10:FF:000004">
    <property type="entry name" value="Guanosine-5'-triphosphate,3'-diphosphate pyrophosphatase"/>
    <property type="match status" value="1"/>
</dbReference>
<dbReference type="FunFam" id="3.30.420.150:FF:000001">
    <property type="entry name" value="Guanosine-5'-triphosphate,3'-diphosphate pyrophosphatase"/>
    <property type="match status" value="1"/>
</dbReference>
<dbReference type="FunFam" id="3.30.420.40:FF:000023">
    <property type="entry name" value="Guanosine-5'-triphosphate,3'-diphosphate pyrophosphatase"/>
    <property type="match status" value="1"/>
</dbReference>
<dbReference type="Gene3D" id="3.30.420.40">
    <property type="match status" value="1"/>
</dbReference>
<dbReference type="Gene3D" id="3.30.420.150">
    <property type="entry name" value="Exopolyphosphatase. Domain 2"/>
    <property type="match status" value="1"/>
</dbReference>
<dbReference type="Gene3D" id="1.10.3210.10">
    <property type="entry name" value="Hypothetical protein af1432"/>
    <property type="match status" value="1"/>
</dbReference>
<dbReference type="HAMAP" id="MF_01550">
    <property type="entry name" value="GppA"/>
    <property type="match status" value="1"/>
</dbReference>
<dbReference type="InterPro" id="IPR043129">
    <property type="entry name" value="ATPase_NBD"/>
</dbReference>
<dbReference type="InterPro" id="IPR022371">
    <property type="entry name" value="Exopolyphosphatase"/>
</dbReference>
<dbReference type="InterPro" id="IPR050273">
    <property type="entry name" value="GppA/Ppx_hydrolase"/>
</dbReference>
<dbReference type="InterPro" id="IPR023709">
    <property type="entry name" value="Guo-5TP_3DP_PyrP"/>
</dbReference>
<dbReference type="InterPro" id="IPR048950">
    <property type="entry name" value="Ppx_GppA_C"/>
</dbReference>
<dbReference type="InterPro" id="IPR003695">
    <property type="entry name" value="Ppx_GppA_N"/>
</dbReference>
<dbReference type="InterPro" id="IPR030673">
    <property type="entry name" value="PyroPPase_GppA_Ppx"/>
</dbReference>
<dbReference type="NCBIfam" id="TIGR03706">
    <property type="entry name" value="exo_poly_only"/>
    <property type="match status" value="1"/>
</dbReference>
<dbReference type="NCBIfam" id="NF008260">
    <property type="entry name" value="PRK11031.1"/>
    <property type="match status" value="1"/>
</dbReference>
<dbReference type="PANTHER" id="PTHR30005">
    <property type="entry name" value="EXOPOLYPHOSPHATASE"/>
    <property type="match status" value="1"/>
</dbReference>
<dbReference type="PANTHER" id="PTHR30005:SF0">
    <property type="entry name" value="RETROGRADE REGULATION PROTEIN 2"/>
    <property type="match status" value="1"/>
</dbReference>
<dbReference type="Pfam" id="PF02541">
    <property type="entry name" value="Ppx-GppA"/>
    <property type="match status" value="1"/>
</dbReference>
<dbReference type="Pfam" id="PF21447">
    <property type="entry name" value="Ppx-GppA_III"/>
    <property type="match status" value="1"/>
</dbReference>
<dbReference type="PIRSF" id="PIRSF001267">
    <property type="entry name" value="Pyrophosphatase_GppA_Ppx"/>
    <property type="match status" value="1"/>
</dbReference>
<dbReference type="SUPFAM" id="SSF53067">
    <property type="entry name" value="Actin-like ATPase domain"/>
    <property type="match status" value="2"/>
</dbReference>
<dbReference type="SUPFAM" id="SSF109604">
    <property type="entry name" value="HD-domain/PDEase-like"/>
    <property type="match status" value="1"/>
</dbReference>
<sequence length="498" mass="55777">MLSSSSLYAAIDLGSNSFHMLVARETAGSIQTLAKIKRKVRLAAGLDKQNRLSQDAMQRGWQCLQLFSERLQDIPQDQVRVVATATLRLATNADEFLQRAQEILGLPIQVISGEEEARLIYQGVAHTTGGPDARLVVDIGGGSTELATGVGAKTTQLISLPMGCVTWLDRYFSDRNLEAGNFERAEQAAREMLRPVAASLREQGWQICVGASGTVQALQEIMVAQGMDEYITLPKLRQLKEHAIQCDKLEELEIEGLTLERALVFPSGLAILLAIFQELDIKTMTLAGGALREGLVYGMLHLPVDQDIRHRTLATLQRRYLLDVEQAKRVSTLADNFLQQVARDWQLDNRCRELLRSACLVHEIGLSIDFRQSPQHAAYLIRHSDLPGFTPAQKKLLATLLQNQINPVDLMPLSQQNALPVNQAQRLCRLLRLAIIFASRRRDDTLPAVRLRVEGETLRLILPAGWLSQHPLRAEMLEQESRWQSYVHWPLMLEETPA</sequence>